<keyword id="KW-0963">Cytoplasm</keyword>
<keyword id="KW-0238">DNA-binding</keyword>
<keyword id="KW-1185">Reference proteome</keyword>
<keyword id="KW-0804">Transcription</keyword>
<keyword id="KW-0805">Transcription regulation</keyword>
<reference key="1">
    <citation type="journal article" date="2001" name="Genome Res.">
        <title>The complete genome sequence of the lactic acid bacterium Lactococcus lactis ssp. lactis IL1403.</title>
        <authorList>
            <person name="Bolotin A."/>
            <person name="Wincker P."/>
            <person name="Mauger S."/>
            <person name="Jaillon O."/>
            <person name="Malarme K."/>
            <person name="Weissenbach J."/>
            <person name="Ehrlich S.D."/>
            <person name="Sorokin A."/>
        </authorList>
    </citation>
    <scope>NUCLEOTIDE SEQUENCE [LARGE SCALE GENOMIC DNA]</scope>
    <source>
        <strain>IL1403</strain>
    </source>
</reference>
<organism>
    <name type="scientific">Lactococcus lactis subsp. lactis (strain IL1403)</name>
    <name type="common">Streptococcus lactis</name>
    <dbReference type="NCBI Taxonomy" id="272623"/>
    <lineage>
        <taxon>Bacteria</taxon>
        <taxon>Bacillati</taxon>
        <taxon>Bacillota</taxon>
        <taxon>Bacilli</taxon>
        <taxon>Lactobacillales</taxon>
        <taxon>Streptococcaceae</taxon>
        <taxon>Lactococcus</taxon>
    </lineage>
</organism>
<protein>
    <recommendedName>
        <fullName evidence="1">Probable transcriptional regulatory protein YcdB</fullName>
    </recommendedName>
</protein>
<sequence length="238" mass="25851">MGRKWANIVAKKTAKDGATSKVYAKFGVEIYAAAKQGEPDPESNSSLKFVIERAKQAQVPKHVIDKAIDKAKGGGDETFVQGRYEGFGPNGSMVIAETLTSNVNRTIANVRTTFHKNGGNIGAAGAVSYMFDNTGVIVFEGTDPDHIFEILLDAEVDVRDVTEEEGNIVVYTEPTDLHKGIAALKEAGITEFSTTELEMIPQSEVELSPEDLEIFEGLIDALEDDDDVQKVYHNVANL</sequence>
<accession>Q9CIX4</accession>
<name>YCDB_LACLA</name>
<gene>
    <name type="primary">ycdB</name>
    <name type="ordered locus">LL0232</name>
    <name type="ORF">L31280</name>
</gene>
<evidence type="ECO:0000255" key="1">
    <source>
        <dbReference type="HAMAP-Rule" id="MF_00918"/>
    </source>
</evidence>
<feature type="chain" id="PRO_0000175826" description="Probable transcriptional regulatory protein YcdB">
    <location>
        <begin position="1"/>
        <end position="238"/>
    </location>
</feature>
<proteinExistence type="inferred from homology"/>
<comment type="subcellular location">
    <subcellularLocation>
        <location evidence="1">Cytoplasm</location>
    </subcellularLocation>
</comment>
<comment type="similarity">
    <text evidence="1">Belongs to the TACO1 family. YeeN subfamily.</text>
</comment>
<dbReference type="EMBL" id="AE005176">
    <property type="protein sequence ID" value="AAK04330.1"/>
    <property type="molecule type" value="Genomic_DNA"/>
</dbReference>
<dbReference type="PIR" id="H86653">
    <property type="entry name" value="H86653"/>
</dbReference>
<dbReference type="RefSeq" id="NP_266388.1">
    <property type="nucleotide sequence ID" value="NC_002662.1"/>
</dbReference>
<dbReference type="RefSeq" id="WP_010905223.1">
    <property type="nucleotide sequence ID" value="NC_002662.1"/>
</dbReference>
<dbReference type="SMR" id="Q9CIX4"/>
<dbReference type="PaxDb" id="272623-L31280"/>
<dbReference type="EnsemblBacteria" id="AAK04330">
    <property type="protein sequence ID" value="AAK04330"/>
    <property type="gene ID" value="L31280"/>
</dbReference>
<dbReference type="KEGG" id="lla:L31280"/>
<dbReference type="PATRIC" id="fig|272623.7.peg.255"/>
<dbReference type="eggNOG" id="COG0217">
    <property type="taxonomic scope" value="Bacteria"/>
</dbReference>
<dbReference type="HOGENOM" id="CLU_062974_2_0_9"/>
<dbReference type="OrthoDB" id="9781053at2"/>
<dbReference type="Proteomes" id="UP000002196">
    <property type="component" value="Chromosome"/>
</dbReference>
<dbReference type="GO" id="GO:0005829">
    <property type="term" value="C:cytosol"/>
    <property type="evidence" value="ECO:0007669"/>
    <property type="project" value="TreeGrafter"/>
</dbReference>
<dbReference type="GO" id="GO:0003677">
    <property type="term" value="F:DNA binding"/>
    <property type="evidence" value="ECO:0007669"/>
    <property type="project" value="UniProtKB-UniRule"/>
</dbReference>
<dbReference type="GO" id="GO:0006355">
    <property type="term" value="P:regulation of DNA-templated transcription"/>
    <property type="evidence" value="ECO:0007669"/>
    <property type="project" value="UniProtKB-UniRule"/>
</dbReference>
<dbReference type="FunFam" id="1.10.10.200:FF:000003">
    <property type="entry name" value="Probable transcriptional regulatory protein YeeN"/>
    <property type="match status" value="1"/>
</dbReference>
<dbReference type="FunFam" id="3.30.70.980:FF:000004">
    <property type="entry name" value="Probable transcriptional regulatory protein YeeN"/>
    <property type="match status" value="1"/>
</dbReference>
<dbReference type="Gene3D" id="1.10.10.200">
    <property type="match status" value="1"/>
</dbReference>
<dbReference type="Gene3D" id="3.30.70.980">
    <property type="match status" value="2"/>
</dbReference>
<dbReference type="HAMAP" id="MF_00693">
    <property type="entry name" value="Transcrip_reg_TACO1"/>
    <property type="match status" value="1"/>
</dbReference>
<dbReference type="HAMAP" id="MF_00918">
    <property type="entry name" value="Transcrip_reg_TACO1_YeeN"/>
    <property type="match status" value="1"/>
</dbReference>
<dbReference type="InterPro" id="IPR017856">
    <property type="entry name" value="Integrase-like_N"/>
</dbReference>
<dbReference type="InterPro" id="IPR048300">
    <property type="entry name" value="TACO1_YebC-like_2nd/3rd_dom"/>
</dbReference>
<dbReference type="InterPro" id="IPR049083">
    <property type="entry name" value="TACO1_YebC_N"/>
</dbReference>
<dbReference type="InterPro" id="IPR002876">
    <property type="entry name" value="Transcrip_reg_TACO1-like"/>
</dbReference>
<dbReference type="InterPro" id="IPR026564">
    <property type="entry name" value="Transcrip_reg_TACO1-like_dom3"/>
</dbReference>
<dbReference type="InterPro" id="IPR026562">
    <property type="entry name" value="Transcrip_reg_TACO1_YeeN"/>
</dbReference>
<dbReference type="InterPro" id="IPR029072">
    <property type="entry name" value="YebC-like"/>
</dbReference>
<dbReference type="NCBIfam" id="NF009044">
    <property type="entry name" value="PRK12378.1"/>
    <property type="match status" value="1"/>
</dbReference>
<dbReference type="NCBIfam" id="TIGR01033">
    <property type="entry name" value="YebC/PmpR family DNA-binding transcriptional regulator"/>
    <property type="match status" value="1"/>
</dbReference>
<dbReference type="PANTHER" id="PTHR12532">
    <property type="entry name" value="TRANSLATIONAL ACTIVATOR OF CYTOCHROME C OXIDASE 1"/>
    <property type="match status" value="1"/>
</dbReference>
<dbReference type="PANTHER" id="PTHR12532:SF0">
    <property type="entry name" value="TRANSLATIONAL ACTIVATOR OF CYTOCHROME C OXIDASE 1"/>
    <property type="match status" value="1"/>
</dbReference>
<dbReference type="Pfam" id="PF20772">
    <property type="entry name" value="TACO1_YebC_N"/>
    <property type="match status" value="1"/>
</dbReference>
<dbReference type="Pfam" id="PF01709">
    <property type="entry name" value="Transcrip_reg"/>
    <property type="match status" value="1"/>
</dbReference>
<dbReference type="SUPFAM" id="SSF75625">
    <property type="entry name" value="YebC-like"/>
    <property type="match status" value="1"/>
</dbReference>